<organism>
    <name type="scientific">Burkholderia cenocepacia (strain HI2424)</name>
    <dbReference type="NCBI Taxonomy" id="331272"/>
    <lineage>
        <taxon>Bacteria</taxon>
        <taxon>Pseudomonadati</taxon>
        <taxon>Pseudomonadota</taxon>
        <taxon>Betaproteobacteria</taxon>
        <taxon>Burkholderiales</taxon>
        <taxon>Burkholderiaceae</taxon>
        <taxon>Burkholderia</taxon>
        <taxon>Burkholderia cepacia complex</taxon>
    </lineage>
</organism>
<dbReference type="EC" id="3.4.23.36" evidence="1"/>
<dbReference type="EMBL" id="CP000458">
    <property type="protein sequence ID" value="ABK09263.1"/>
    <property type="molecule type" value="Genomic_DNA"/>
</dbReference>
<dbReference type="RefSeq" id="WP_006478035.1">
    <property type="nucleotide sequence ID" value="NC_008542.1"/>
</dbReference>
<dbReference type="SMR" id="A0K9T6"/>
<dbReference type="GeneID" id="83049327"/>
<dbReference type="KEGG" id="bch:Bcen2424_2513"/>
<dbReference type="HOGENOM" id="CLU_083252_4_0_4"/>
<dbReference type="UniPathway" id="UPA00665"/>
<dbReference type="GO" id="GO:0005886">
    <property type="term" value="C:plasma membrane"/>
    <property type="evidence" value="ECO:0007669"/>
    <property type="project" value="UniProtKB-SubCell"/>
</dbReference>
<dbReference type="GO" id="GO:0004190">
    <property type="term" value="F:aspartic-type endopeptidase activity"/>
    <property type="evidence" value="ECO:0007669"/>
    <property type="project" value="UniProtKB-UniRule"/>
</dbReference>
<dbReference type="GO" id="GO:0006508">
    <property type="term" value="P:proteolysis"/>
    <property type="evidence" value="ECO:0007669"/>
    <property type="project" value="UniProtKB-KW"/>
</dbReference>
<dbReference type="HAMAP" id="MF_00161">
    <property type="entry name" value="LspA"/>
    <property type="match status" value="1"/>
</dbReference>
<dbReference type="InterPro" id="IPR001872">
    <property type="entry name" value="Peptidase_A8"/>
</dbReference>
<dbReference type="NCBIfam" id="TIGR00077">
    <property type="entry name" value="lspA"/>
    <property type="match status" value="1"/>
</dbReference>
<dbReference type="PANTHER" id="PTHR33695">
    <property type="entry name" value="LIPOPROTEIN SIGNAL PEPTIDASE"/>
    <property type="match status" value="1"/>
</dbReference>
<dbReference type="PANTHER" id="PTHR33695:SF1">
    <property type="entry name" value="LIPOPROTEIN SIGNAL PEPTIDASE"/>
    <property type="match status" value="1"/>
</dbReference>
<dbReference type="Pfam" id="PF01252">
    <property type="entry name" value="Peptidase_A8"/>
    <property type="match status" value="1"/>
</dbReference>
<dbReference type="PRINTS" id="PR00781">
    <property type="entry name" value="LIPOSIGPTASE"/>
</dbReference>
<dbReference type="PROSITE" id="PS00855">
    <property type="entry name" value="SPASE_II"/>
    <property type="match status" value="1"/>
</dbReference>
<gene>
    <name evidence="1" type="primary">lspA</name>
    <name type="ordered locus">Bcen2424_2513</name>
</gene>
<feature type="chain" id="PRO_1000038783" description="Lipoprotein signal peptidase">
    <location>
        <begin position="1"/>
        <end position="166"/>
    </location>
</feature>
<feature type="transmembrane region" description="Helical" evidence="1">
    <location>
        <begin position="9"/>
        <end position="29"/>
    </location>
</feature>
<feature type="transmembrane region" description="Helical" evidence="1">
    <location>
        <begin position="45"/>
        <end position="65"/>
    </location>
</feature>
<feature type="transmembrane region" description="Helical" evidence="1">
    <location>
        <begin position="71"/>
        <end position="91"/>
    </location>
</feature>
<feature type="transmembrane region" description="Helical" evidence="1">
    <location>
        <begin position="100"/>
        <end position="120"/>
    </location>
</feature>
<feature type="transmembrane region" description="Helical" evidence="1">
    <location>
        <begin position="135"/>
        <end position="155"/>
    </location>
</feature>
<feature type="active site" evidence="1">
    <location>
        <position position="126"/>
    </location>
</feature>
<feature type="active site" evidence="1">
    <location>
        <position position="144"/>
    </location>
</feature>
<comment type="function">
    <text evidence="1">This protein specifically catalyzes the removal of signal peptides from prolipoproteins.</text>
</comment>
<comment type="catalytic activity">
    <reaction evidence="1">
        <text>Release of signal peptides from bacterial membrane prolipoproteins. Hydrolyzes -Xaa-Yaa-Zaa-|-(S,diacylglyceryl)Cys-, in which Xaa is hydrophobic (preferably Leu), and Yaa (Ala or Ser) and Zaa (Gly or Ala) have small, neutral side chains.</text>
        <dbReference type="EC" id="3.4.23.36"/>
    </reaction>
</comment>
<comment type="pathway">
    <text evidence="1">Protein modification; lipoprotein biosynthesis (signal peptide cleavage).</text>
</comment>
<comment type="subcellular location">
    <subcellularLocation>
        <location evidence="1">Cell inner membrane</location>
        <topology evidence="1">Multi-pass membrane protein</topology>
    </subcellularLocation>
</comment>
<comment type="similarity">
    <text evidence="1">Belongs to the peptidase A8 family.</text>
</comment>
<evidence type="ECO:0000255" key="1">
    <source>
        <dbReference type="HAMAP-Rule" id="MF_00161"/>
    </source>
</evidence>
<keyword id="KW-0064">Aspartyl protease</keyword>
<keyword id="KW-0997">Cell inner membrane</keyword>
<keyword id="KW-1003">Cell membrane</keyword>
<keyword id="KW-0378">Hydrolase</keyword>
<keyword id="KW-0472">Membrane</keyword>
<keyword id="KW-0645">Protease</keyword>
<keyword id="KW-0812">Transmembrane</keyword>
<keyword id="KW-1133">Transmembrane helix</keyword>
<accession>A0K9T6</accession>
<reference key="1">
    <citation type="submission" date="2006-08" db="EMBL/GenBank/DDBJ databases">
        <title>Complete sequence of chromosome 1 of Burkholderia cenocepacia HI2424.</title>
        <authorList>
            <person name="Copeland A."/>
            <person name="Lucas S."/>
            <person name="Lapidus A."/>
            <person name="Barry K."/>
            <person name="Detter J.C."/>
            <person name="Glavina del Rio T."/>
            <person name="Hammon N."/>
            <person name="Israni S."/>
            <person name="Pitluck S."/>
            <person name="Chain P."/>
            <person name="Malfatti S."/>
            <person name="Shin M."/>
            <person name="Vergez L."/>
            <person name="Schmutz J."/>
            <person name="Larimer F."/>
            <person name="Land M."/>
            <person name="Hauser L."/>
            <person name="Kyrpides N."/>
            <person name="Kim E."/>
            <person name="LiPuma J.J."/>
            <person name="Gonzalez C.F."/>
            <person name="Konstantinidis K."/>
            <person name="Tiedje J.M."/>
            <person name="Richardson P."/>
        </authorList>
    </citation>
    <scope>NUCLEOTIDE SEQUENCE [LARGE SCALE GENOMIC DNA]</scope>
    <source>
        <strain>HI2424</strain>
    </source>
</reference>
<protein>
    <recommendedName>
        <fullName evidence="1">Lipoprotein signal peptidase</fullName>
        <ecNumber evidence="1">3.4.23.36</ecNumber>
    </recommendedName>
    <alternativeName>
        <fullName evidence="1">Prolipoprotein signal peptidase</fullName>
    </alternativeName>
    <alternativeName>
        <fullName evidence="1">Signal peptidase II</fullName>
        <shortName evidence="1">SPase II</shortName>
    </alternativeName>
</protein>
<proteinExistence type="inferred from homology"/>
<name>LSPA_BURCH</name>
<sequence length="166" mass="18057">MAKTLSKPASGALAPWLGISLIVILFDQLSKIAILKTFAYGAQHALTSFFNLVLVYNRGAAFGFLSTASGWQRWAFTALGVGATLVICFLLKRHGHQRLFSVSLALILGGALGNVIDRLVYGHVIDFLDFHLGAWHFPAFNLADSAITVGAVLLIYDELRRVRGAR</sequence>